<gene>
    <name type="ordered locus">MJ0836</name>
</gene>
<organism>
    <name type="scientific">Methanocaldococcus jannaschii (strain ATCC 43067 / DSM 2661 / JAL-1 / JCM 10045 / NBRC 100440)</name>
    <name type="common">Methanococcus jannaschii</name>
    <dbReference type="NCBI Taxonomy" id="243232"/>
    <lineage>
        <taxon>Archaea</taxon>
        <taxon>Methanobacteriati</taxon>
        <taxon>Methanobacteriota</taxon>
        <taxon>Methanomada group</taxon>
        <taxon>Methanococci</taxon>
        <taxon>Methanococcales</taxon>
        <taxon>Methanocaldococcaceae</taxon>
        <taxon>Methanocaldococcus</taxon>
    </lineage>
</organism>
<keyword id="KW-1185">Reference proteome</keyword>
<protein>
    <recommendedName>
        <fullName>Uncharacterized protein MJ0836</fullName>
    </recommendedName>
</protein>
<name>Y836_METJA</name>
<dbReference type="EMBL" id="L77117">
    <property type="protein sequence ID" value="AAB98839.1"/>
    <property type="molecule type" value="Genomic_DNA"/>
</dbReference>
<dbReference type="PIR" id="D64404">
    <property type="entry name" value="D64404"/>
</dbReference>
<dbReference type="RefSeq" id="WP_010870350.1">
    <property type="nucleotide sequence ID" value="NC_000909.1"/>
</dbReference>
<dbReference type="SMR" id="Q58246"/>
<dbReference type="STRING" id="243232.MJ_0836"/>
<dbReference type="PaxDb" id="243232-MJ_0836"/>
<dbReference type="EnsemblBacteria" id="AAB98839">
    <property type="protein sequence ID" value="AAB98839"/>
    <property type="gene ID" value="MJ_0836"/>
</dbReference>
<dbReference type="GeneID" id="1451722"/>
<dbReference type="KEGG" id="mja:MJ_0836"/>
<dbReference type="eggNOG" id="arCOG05056">
    <property type="taxonomic scope" value="Archaea"/>
</dbReference>
<dbReference type="HOGENOM" id="CLU_1998728_0_0_2"/>
<dbReference type="InParanoid" id="Q58246"/>
<dbReference type="OrthoDB" id="39225at2157"/>
<dbReference type="PhylomeDB" id="Q58246"/>
<dbReference type="Proteomes" id="UP000000805">
    <property type="component" value="Chromosome"/>
</dbReference>
<dbReference type="InterPro" id="IPR007212">
    <property type="entry name" value="Zf-like"/>
</dbReference>
<dbReference type="Pfam" id="PF04071">
    <property type="entry name" value="zf-like"/>
    <property type="match status" value="1"/>
</dbReference>
<proteinExistence type="predicted"/>
<reference key="1">
    <citation type="journal article" date="1996" name="Science">
        <title>Complete genome sequence of the methanogenic archaeon, Methanococcus jannaschii.</title>
        <authorList>
            <person name="Bult C.J."/>
            <person name="White O."/>
            <person name="Olsen G.J."/>
            <person name="Zhou L."/>
            <person name="Fleischmann R.D."/>
            <person name="Sutton G.G."/>
            <person name="Blake J.A."/>
            <person name="FitzGerald L.M."/>
            <person name="Clayton R.A."/>
            <person name="Gocayne J.D."/>
            <person name="Kerlavage A.R."/>
            <person name="Dougherty B.A."/>
            <person name="Tomb J.-F."/>
            <person name="Adams M.D."/>
            <person name="Reich C.I."/>
            <person name="Overbeek R."/>
            <person name="Kirkness E.F."/>
            <person name="Weinstock K.G."/>
            <person name="Merrick J.M."/>
            <person name="Glodek A."/>
            <person name="Scott J.L."/>
            <person name="Geoghagen N.S.M."/>
            <person name="Weidman J.F."/>
            <person name="Fuhrmann J.L."/>
            <person name="Nguyen D."/>
            <person name="Utterback T.R."/>
            <person name="Kelley J.M."/>
            <person name="Peterson J.D."/>
            <person name="Sadow P.W."/>
            <person name="Hanna M.C."/>
            <person name="Cotton M.D."/>
            <person name="Roberts K.M."/>
            <person name="Hurst M.A."/>
            <person name="Kaine B.P."/>
            <person name="Borodovsky M."/>
            <person name="Klenk H.-P."/>
            <person name="Fraser C.M."/>
            <person name="Smith H.O."/>
            <person name="Woese C.R."/>
            <person name="Venter J.C."/>
        </authorList>
    </citation>
    <scope>NUCLEOTIDE SEQUENCE [LARGE SCALE GENOMIC DNA]</scope>
    <source>
        <strain>ATCC 43067 / DSM 2661 / JAL-1 / JCM 10045 / NBRC 100440</strain>
    </source>
</reference>
<accession>Q58246</accession>
<feature type="chain" id="PRO_0000107073" description="Uncharacterized protein MJ0836">
    <location>
        <begin position="1"/>
        <end position="119"/>
    </location>
</feature>
<sequence>MIELAKNHLKKVLEVCGANRNCEYYPCHFDGQVCLWCYCPFYPCEDEELGEYVEKKDGTKIWSCMKCFWVHREDVATEILREILNLTKDKDIDEALKLLDNHELMLKIKDRVKAKYPNR</sequence>